<keyword id="KW-0235">DNA replication</keyword>
<keyword id="KW-0238">DNA-binding</keyword>
<keyword id="KW-0239">DNA-directed DNA polymerase</keyword>
<keyword id="KW-0548">Nucleotidyltransferase</keyword>
<keyword id="KW-1185">Reference proteome</keyword>
<keyword id="KW-0808">Transferase</keyword>
<protein>
    <recommendedName>
        <fullName>DNA polymerase 2</fullName>
        <ecNumber>2.7.7.7</ecNumber>
    </recommendedName>
    <alternativeName>
        <fullName>DNA polymerase B2</fullName>
    </alternativeName>
    <alternativeName>
        <fullName>DNA polymerase II</fullName>
    </alternativeName>
</protein>
<sequence length="626" mass="73535">MGRTQPSYTMAVNRELEKLERIIERLHSPILSLLLERVKEKVRYTQSASYDELVDPYNLVYFALIWALAEECEKMEEYVLDAYPIKGGVKLFLSNFKEKTIRTTFPVYTITDNPDIVLQHPEVRYYEKEKWKTLDGKEVKVYRFEVESLDAYYYMRKRLNVVNETPTVLSQTLYRLGIKPFRRFRSSDDEFPKVTIARVVPLDWYGESLKGKVFEVKINNEVRRFYEKPEVEVDIAECLGEACNYVKSNVKIRIEKKRSPVSAKGLIEWSFISLTPIHEIAYATIGKVLTINEAWVAFKRRIIIPKVVPRVEKLRRLEDIMMVDKGGLILFPQPGCYDNVYQVDFSSMYPSLIVKHNISAETVEACDDIKTELHSICLKEKGIIPEALQWLIERKSELKKIDEERAEAIKWILVASFGYLGYRNSLFGKIEAYEMVTYLARKTLRRTMEIAEEMGLRVLHGIIDSLVVKGDNVDKFIEKVEKETGLRLDYKRYNWIIFTITRNNTPYPTRYIANMNGEMIAKGLIRENMPNIVKSFLEDVLREFSSAKTCSDVKKLRIRDLFEHYRKRAINGEPIDYVIWIKDVPYVRGIKGFYEARLGYMGRDVNYYINYLKRVYEDVEEVMSRC</sequence>
<comment type="function">
    <text>This polymerase is devoid of exonuclease activity.</text>
</comment>
<comment type="catalytic activity">
    <reaction>
        <text>DNA(n) + a 2'-deoxyribonucleoside 5'-triphosphate = DNA(n+1) + diphosphate</text>
        <dbReference type="Rhea" id="RHEA:22508"/>
        <dbReference type="Rhea" id="RHEA-COMP:17339"/>
        <dbReference type="Rhea" id="RHEA-COMP:17340"/>
        <dbReference type="ChEBI" id="CHEBI:33019"/>
        <dbReference type="ChEBI" id="CHEBI:61560"/>
        <dbReference type="ChEBI" id="CHEBI:173112"/>
        <dbReference type="EC" id="2.7.7.7"/>
    </reaction>
</comment>
<comment type="similarity">
    <text evidence="1">Belongs to the DNA polymerase type-B family.</text>
</comment>
<comment type="sequence caution" evidence="1">
    <conflict type="erroneous initiation">
        <sequence resource="EMBL-CDS" id="AAK41686"/>
    </conflict>
</comment>
<comment type="sequence caution" evidence="1">
    <conflict type="frameshift">
        <sequence resource="EMBL-CDS" id="AAK41686"/>
    </conflict>
    <text>SSO1459 and SSO8124 have been merged into one gene.</text>
</comment>
<comment type="sequence caution" evidence="1">
    <conflict type="frameshift">
        <sequence resource="EMBL-CDS" id="AAK41687"/>
    </conflict>
    <text>SSO1459 and SSO8124 have been merged into one gene.</text>
</comment>
<proteinExistence type="inferred from homology"/>
<name>DPOL2_SACS2</name>
<organism>
    <name type="scientific">Saccharolobus solfataricus (strain ATCC 35092 / DSM 1617 / JCM 11322 / P2)</name>
    <name type="common">Sulfolobus solfataricus</name>
    <dbReference type="NCBI Taxonomy" id="273057"/>
    <lineage>
        <taxon>Archaea</taxon>
        <taxon>Thermoproteota</taxon>
        <taxon>Thermoprotei</taxon>
        <taxon>Sulfolobales</taxon>
        <taxon>Sulfolobaceae</taxon>
        <taxon>Saccharolobus</taxon>
    </lineage>
</organism>
<dbReference type="EC" id="2.7.7.7"/>
<dbReference type="EMBL" id="X71597">
    <property type="protein sequence ID" value="CAA50600.1"/>
    <property type="molecule type" value="Genomic_DNA"/>
</dbReference>
<dbReference type="EMBL" id="AE006641">
    <property type="protein sequence ID" value="AAK41686.1"/>
    <property type="status" value="ALT_FRAME"/>
    <property type="molecule type" value="Genomic_DNA"/>
</dbReference>
<dbReference type="EMBL" id="AE006641">
    <property type="protein sequence ID" value="AAK41687.1"/>
    <property type="status" value="ALT_FRAME"/>
    <property type="molecule type" value="Genomic_DNA"/>
</dbReference>
<dbReference type="PIR" id="G90303">
    <property type="entry name" value="G90303"/>
</dbReference>
<dbReference type="PIR" id="H90303">
    <property type="entry name" value="H90303"/>
</dbReference>
<dbReference type="PIR" id="S34120">
    <property type="entry name" value="S34120"/>
</dbReference>
<dbReference type="SMR" id="Q07635"/>
<dbReference type="STRING" id="273057.SSO1459"/>
<dbReference type="PaxDb" id="273057-SSO1459"/>
<dbReference type="EnsemblBacteria" id="AAK41686">
    <property type="protein sequence ID" value="AAK41686"/>
    <property type="gene ID" value="SSO1459"/>
</dbReference>
<dbReference type="EnsemblBacteria" id="AAK41687">
    <property type="protein sequence ID" value="AAK41687"/>
    <property type="gene ID" value="SSO8124"/>
</dbReference>
<dbReference type="KEGG" id="sso:SSO1459"/>
<dbReference type="KEGG" id="sso:SSO8124"/>
<dbReference type="PATRIC" id="fig|273057.12.peg.1489"/>
<dbReference type="eggNOG" id="arCOG00329">
    <property type="taxonomic scope" value="Archaea"/>
</dbReference>
<dbReference type="HOGENOM" id="CLU_491446_0_0_2"/>
<dbReference type="InParanoid" id="Q07635"/>
<dbReference type="PhylomeDB" id="Q07635"/>
<dbReference type="BRENDA" id="2.7.7.7">
    <property type="organism ID" value="6163"/>
</dbReference>
<dbReference type="Proteomes" id="UP000001974">
    <property type="component" value="Chromosome"/>
</dbReference>
<dbReference type="GO" id="GO:0003677">
    <property type="term" value="F:DNA binding"/>
    <property type="evidence" value="ECO:0007669"/>
    <property type="project" value="UniProtKB-KW"/>
</dbReference>
<dbReference type="GO" id="GO:0003887">
    <property type="term" value="F:DNA-directed DNA polymerase activity"/>
    <property type="evidence" value="ECO:0000318"/>
    <property type="project" value="GO_Central"/>
</dbReference>
<dbReference type="GO" id="GO:0000166">
    <property type="term" value="F:nucleotide binding"/>
    <property type="evidence" value="ECO:0007669"/>
    <property type="project" value="InterPro"/>
</dbReference>
<dbReference type="GO" id="GO:0006261">
    <property type="term" value="P:DNA-templated DNA replication"/>
    <property type="evidence" value="ECO:0000318"/>
    <property type="project" value="GO_Central"/>
</dbReference>
<dbReference type="CDD" id="cd05531">
    <property type="entry name" value="POLBc_B2"/>
    <property type="match status" value="1"/>
</dbReference>
<dbReference type="Gene3D" id="1.10.287.690">
    <property type="entry name" value="Helix hairpin bin"/>
    <property type="match status" value="1"/>
</dbReference>
<dbReference type="Gene3D" id="3.90.1600.10">
    <property type="entry name" value="Palm domain of DNA polymerase"/>
    <property type="match status" value="1"/>
</dbReference>
<dbReference type="InterPro" id="IPR006172">
    <property type="entry name" value="DNA-dir_DNA_pol_B"/>
</dbReference>
<dbReference type="InterPro" id="IPR006134">
    <property type="entry name" value="DNA-dir_DNA_pol_B_multi_dom"/>
</dbReference>
<dbReference type="InterPro" id="IPR043502">
    <property type="entry name" value="DNA/RNA_pol_sf"/>
</dbReference>
<dbReference type="InterPro" id="IPR023211">
    <property type="entry name" value="DNA_pol_palm_dom_sf"/>
</dbReference>
<dbReference type="InterPro" id="IPR050240">
    <property type="entry name" value="DNA_pol_type-B"/>
</dbReference>
<dbReference type="PANTHER" id="PTHR10322">
    <property type="entry name" value="DNA POLYMERASE CATALYTIC SUBUNIT"/>
    <property type="match status" value="1"/>
</dbReference>
<dbReference type="PANTHER" id="PTHR10322:SF23">
    <property type="entry name" value="DNA POLYMERASE DELTA CATALYTIC SUBUNIT"/>
    <property type="match status" value="1"/>
</dbReference>
<dbReference type="Pfam" id="PF00136">
    <property type="entry name" value="DNA_pol_B"/>
    <property type="match status" value="1"/>
</dbReference>
<dbReference type="SMART" id="SM00486">
    <property type="entry name" value="POLBc"/>
    <property type="match status" value="1"/>
</dbReference>
<dbReference type="SUPFAM" id="SSF56672">
    <property type="entry name" value="DNA/RNA polymerases"/>
    <property type="match status" value="1"/>
</dbReference>
<evidence type="ECO:0000305" key="1"/>
<feature type="chain" id="PRO_0000046484" description="DNA polymerase 2">
    <location>
        <begin position="1"/>
        <end position="626"/>
    </location>
</feature>
<feature type="sequence conflict" description="In Ref. 1; CAA50600." evidence="1" ref="1">
    <original>K</original>
    <variation>R</variation>
    <location>
        <position position="613"/>
    </location>
</feature>
<feature type="sequence conflict" description="In Ref. 1; CAA50600." evidence="1" ref="1">
    <original>E</original>
    <variation>D</variation>
    <location>
        <position position="617"/>
    </location>
</feature>
<feature type="sequence conflict" description="In Ref. 1; CAA50600." evidence="1" ref="1">
    <original>M</original>
    <variation>I</variation>
    <location>
        <position position="623"/>
    </location>
</feature>
<reference key="1">
    <citation type="journal article" date="1993" name="Nucleic Acids Res.">
        <title>Nucleotide sequence of the gene for a 74 kDa DNA polymerase from the archaeon Sulfolobus solfataricus.</title>
        <authorList>
            <person name="Prangishvili D."/>
            <person name="Klenk H.-P."/>
        </authorList>
    </citation>
    <scope>NUCLEOTIDE SEQUENCE [GENOMIC DNA]</scope>
    <source>
        <strain>ATCC 35092 / DSM 1617 / JCM 11322 / P2</strain>
    </source>
</reference>
<reference key="2">
    <citation type="journal article" date="2001" name="Proc. Natl. Acad. Sci. U.S.A.">
        <title>The complete genome of the crenarchaeon Sulfolobus solfataricus P2.</title>
        <authorList>
            <person name="She Q."/>
            <person name="Singh R.K."/>
            <person name="Confalonieri F."/>
            <person name="Zivanovic Y."/>
            <person name="Allard G."/>
            <person name="Awayez M.J."/>
            <person name="Chan-Weiher C.C.-Y."/>
            <person name="Clausen I.G."/>
            <person name="Curtis B.A."/>
            <person name="De Moors A."/>
            <person name="Erauso G."/>
            <person name="Fletcher C."/>
            <person name="Gordon P.M.K."/>
            <person name="Heikamp-de Jong I."/>
            <person name="Jeffries A.C."/>
            <person name="Kozera C.J."/>
            <person name="Medina N."/>
            <person name="Peng X."/>
            <person name="Thi-Ngoc H.P."/>
            <person name="Redder P."/>
            <person name="Schenk M.E."/>
            <person name="Theriault C."/>
            <person name="Tolstrup N."/>
            <person name="Charlebois R.L."/>
            <person name="Doolittle W.F."/>
            <person name="Duguet M."/>
            <person name="Gaasterland T."/>
            <person name="Garrett R.A."/>
            <person name="Ragan M.A."/>
            <person name="Sensen C.W."/>
            <person name="Van der Oost J."/>
        </authorList>
    </citation>
    <scope>NUCLEOTIDE SEQUENCE [LARGE SCALE GENOMIC DNA]</scope>
    <source>
        <strain>ATCC 35092 / DSM 1617 / JCM 11322 / P2</strain>
    </source>
</reference>
<gene>
    <name type="primary">dpo2</name>
    <name type="ordered locus">SSO1459/SSO8124</name>
</gene>
<accession>Q07635</accession>